<proteinExistence type="predicted"/>
<feature type="chain" id="PRO_0000410534" description="Uncharacterized protein 010R">
    <location>
        <begin position="1"/>
        <end position="137"/>
    </location>
</feature>
<feature type="transmembrane region" description="Helical" evidence="1">
    <location>
        <begin position="20"/>
        <end position="42"/>
    </location>
</feature>
<organismHost>
    <name type="scientific">Dryophytes versicolor</name>
    <name type="common">chameleon treefrog</name>
    <dbReference type="NCBI Taxonomy" id="30343"/>
</organismHost>
<organismHost>
    <name type="scientific">Lithobates pipiens</name>
    <name type="common">Northern leopard frog</name>
    <name type="synonym">Rana pipiens</name>
    <dbReference type="NCBI Taxonomy" id="8404"/>
</organismHost>
<organismHost>
    <name type="scientific">Lithobates sylvaticus</name>
    <name type="common">Wood frog</name>
    <name type="synonym">Rana sylvatica</name>
    <dbReference type="NCBI Taxonomy" id="45438"/>
</organismHost>
<organismHost>
    <name type="scientific">Notophthalmus viridescens</name>
    <name type="common">Eastern newt</name>
    <name type="synonym">Triturus viridescens</name>
    <dbReference type="NCBI Taxonomy" id="8316"/>
</organismHost>
<gene>
    <name type="ORF">FV3-010R</name>
</gene>
<protein>
    <recommendedName>
        <fullName>Uncharacterized protein 010R</fullName>
    </recommendedName>
</protein>
<reference key="1">
    <citation type="journal article" date="2004" name="Virology">
        <title>Comparative genomic analyses of frog virus 3, type species of the genus Ranavirus (family Iridoviridae).</title>
        <authorList>
            <person name="Tan W.G."/>
            <person name="Barkman T.J."/>
            <person name="Gregory Chinchar V."/>
            <person name="Essani K."/>
        </authorList>
    </citation>
    <scope>NUCLEOTIDE SEQUENCE [LARGE SCALE GENOMIC DNA]</scope>
</reference>
<comment type="subcellular location">
    <subcellularLocation>
        <location evidence="2">Host membrane</location>
        <topology evidence="2">Single-pass membrane protein</topology>
    </subcellularLocation>
</comment>
<sequence>MKMDTDCRHWIVLASVPVLTVLAFKGEGALALAGLLVMAAVAMYRDRTEKKYSAARAPSPIAGHKTAYVTDPSAFAAGTVPVYPAPSNMGSDRFEGWVGGVLTGVGSSHLDHRKFAERQLVDRREKMVGYGWTKSFF</sequence>
<keyword id="KW-1043">Host membrane</keyword>
<keyword id="KW-0472">Membrane</keyword>
<keyword id="KW-1185">Reference proteome</keyword>
<keyword id="KW-0812">Transmembrane</keyword>
<keyword id="KW-1133">Transmembrane helix</keyword>
<accession>Q6GZW5</accession>
<evidence type="ECO:0000255" key="1"/>
<evidence type="ECO:0000305" key="2"/>
<name>010R_FRG3G</name>
<dbReference type="EMBL" id="AY548484">
    <property type="protein sequence ID" value="AAT09669.1"/>
    <property type="molecule type" value="Genomic_DNA"/>
</dbReference>
<dbReference type="RefSeq" id="YP_031588.1">
    <property type="nucleotide sequence ID" value="NC_005946.1"/>
</dbReference>
<dbReference type="KEGG" id="vg:2947782"/>
<dbReference type="Proteomes" id="UP000008770">
    <property type="component" value="Segment"/>
</dbReference>
<dbReference type="GO" id="GO:0033644">
    <property type="term" value="C:host cell membrane"/>
    <property type="evidence" value="ECO:0007669"/>
    <property type="project" value="UniProtKB-SubCell"/>
</dbReference>
<dbReference type="GO" id="GO:0016020">
    <property type="term" value="C:membrane"/>
    <property type="evidence" value="ECO:0007669"/>
    <property type="project" value="UniProtKB-KW"/>
</dbReference>
<organism>
    <name type="scientific">Frog virus 3 (isolate Goorha)</name>
    <name type="common">FV-3</name>
    <dbReference type="NCBI Taxonomy" id="654924"/>
    <lineage>
        <taxon>Viruses</taxon>
        <taxon>Varidnaviria</taxon>
        <taxon>Bamfordvirae</taxon>
        <taxon>Nucleocytoviricota</taxon>
        <taxon>Megaviricetes</taxon>
        <taxon>Pimascovirales</taxon>
        <taxon>Iridoviridae</taxon>
        <taxon>Alphairidovirinae</taxon>
        <taxon>Ranavirus</taxon>
        <taxon>Frog virus 3</taxon>
    </lineage>
</organism>